<keyword id="KW-0687">Ribonucleoprotein</keyword>
<keyword id="KW-0689">Ribosomal protein</keyword>
<gene>
    <name evidence="1" type="primary">rpmJ2</name>
    <name type="ordered locus">YPTB0981</name>
</gene>
<name>RL362_YERPS</name>
<comment type="similarity">
    <text evidence="1">Belongs to the bacterial ribosomal protein bL36 family.</text>
</comment>
<dbReference type="EMBL" id="BX936398">
    <property type="protein sequence ID" value="CAH20221.1"/>
    <property type="molecule type" value="Genomic_DNA"/>
</dbReference>
<dbReference type="SMR" id="Q66DR2"/>
<dbReference type="KEGG" id="ypo:BZ17_1566"/>
<dbReference type="KEGG" id="yps:YPTB0981"/>
<dbReference type="PATRIC" id="fig|273123.14.peg.1662"/>
<dbReference type="Proteomes" id="UP000001011">
    <property type="component" value="Chromosome"/>
</dbReference>
<dbReference type="GO" id="GO:1990904">
    <property type="term" value="C:ribonucleoprotein complex"/>
    <property type="evidence" value="ECO:0007669"/>
    <property type="project" value="UniProtKB-KW"/>
</dbReference>
<dbReference type="GO" id="GO:0005840">
    <property type="term" value="C:ribosome"/>
    <property type="evidence" value="ECO:0007669"/>
    <property type="project" value="UniProtKB-KW"/>
</dbReference>
<dbReference type="GO" id="GO:0003735">
    <property type="term" value="F:structural constituent of ribosome"/>
    <property type="evidence" value="ECO:0007669"/>
    <property type="project" value="InterPro"/>
</dbReference>
<dbReference type="GO" id="GO:0006412">
    <property type="term" value="P:translation"/>
    <property type="evidence" value="ECO:0007669"/>
    <property type="project" value="UniProtKB-UniRule"/>
</dbReference>
<dbReference type="HAMAP" id="MF_00251">
    <property type="entry name" value="Ribosomal_bL36"/>
    <property type="match status" value="1"/>
</dbReference>
<dbReference type="InterPro" id="IPR000473">
    <property type="entry name" value="Ribosomal_bL36"/>
</dbReference>
<dbReference type="InterPro" id="IPR035977">
    <property type="entry name" value="Ribosomal_bL36_sp"/>
</dbReference>
<dbReference type="InterPro" id="IPR047621">
    <property type="entry name" value="Ribosomal_L36_bact"/>
</dbReference>
<dbReference type="NCBIfam" id="NF002021">
    <property type="entry name" value="PRK00831.1"/>
    <property type="match status" value="1"/>
</dbReference>
<dbReference type="NCBIfam" id="TIGR01022">
    <property type="entry name" value="rpmJ_bact"/>
    <property type="match status" value="1"/>
</dbReference>
<dbReference type="PANTHER" id="PTHR47781">
    <property type="entry name" value="50S RIBOSOMAL PROTEIN L36 2"/>
    <property type="match status" value="1"/>
</dbReference>
<dbReference type="PANTHER" id="PTHR47781:SF1">
    <property type="entry name" value="LARGE RIBOSOMAL SUBUNIT PROTEIN BL36B"/>
    <property type="match status" value="1"/>
</dbReference>
<dbReference type="Pfam" id="PF00444">
    <property type="entry name" value="Ribosomal_L36"/>
    <property type="match status" value="1"/>
</dbReference>
<dbReference type="SUPFAM" id="SSF57840">
    <property type="entry name" value="Ribosomal protein L36"/>
    <property type="match status" value="1"/>
</dbReference>
<dbReference type="PROSITE" id="PS00828">
    <property type="entry name" value="RIBOSOMAL_L36"/>
    <property type="match status" value="1"/>
</dbReference>
<evidence type="ECO:0000255" key="1">
    <source>
        <dbReference type="HAMAP-Rule" id="MF_00251"/>
    </source>
</evidence>
<evidence type="ECO:0000305" key="2"/>
<organism>
    <name type="scientific">Yersinia pseudotuberculosis serotype I (strain IP32953)</name>
    <dbReference type="NCBI Taxonomy" id="273123"/>
    <lineage>
        <taxon>Bacteria</taxon>
        <taxon>Pseudomonadati</taxon>
        <taxon>Pseudomonadota</taxon>
        <taxon>Gammaproteobacteria</taxon>
        <taxon>Enterobacterales</taxon>
        <taxon>Yersiniaceae</taxon>
        <taxon>Yersinia</taxon>
    </lineage>
</organism>
<sequence>MQVLSSLRSAKNRHPDCKIVRRRGRVYVICKSNPRFKAVQGGTHKKR</sequence>
<protein>
    <recommendedName>
        <fullName evidence="1">Large ribosomal subunit protein bL36B</fullName>
    </recommendedName>
    <alternativeName>
        <fullName evidence="2">50S ribosomal protein L36 2</fullName>
    </alternativeName>
</protein>
<proteinExistence type="inferred from homology"/>
<reference key="1">
    <citation type="journal article" date="2004" name="Proc. Natl. Acad. Sci. U.S.A.">
        <title>Insights into the evolution of Yersinia pestis through whole-genome comparison with Yersinia pseudotuberculosis.</title>
        <authorList>
            <person name="Chain P.S.G."/>
            <person name="Carniel E."/>
            <person name="Larimer F.W."/>
            <person name="Lamerdin J."/>
            <person name="Stoutland P.O."/>
            <person name="Regala W.M."/>
            <person name="Georgescu A.M."/>
            <person name="Vergez L.M."/>
            <person name="Land M.L."/>
            <person name="Motin V.L."/>
            <person name="Brubaker R.R."/>
            <person name="Fowler J."/>
            <person name="Hinnebusch J."/>
            <person name="Marceau M."/>
            <person name="Medigue C."/>
            <person name="Simonet M."/>
            <person name="Chenal-Francisque V."/>
            <person name="Souza B."/>
            <person name="Dacheux D."/>
            <person name="Elliott J.M."/>
            <person name="Derbise A."/>
            <person name="Hauser L.J."/>
            <person name="Garcia E."/>
        </authorList>
    </citation>
    <scope>NUCLEOTIDE SEQUENCE [LARGE SCALE GENOMIC DNA]</scope>
    <source>
        <strain>IP32953</strain>
    </source>
</reference>
<accession>Q66DR2</accession>
<feature type="chain" id="PRO_0000126305" description="Large ribosomal subunit protein bL36B">
    <location>
        <begin position="1"/>
        <end position="47"/>
    </location>
</feature>